<proteinExistence type="evidence at protein level"/>
<feature type="transit peptide" description="Mitochondrion" evidence="2">
    <location>
        <begin position="1"/>
        <end position="29"/>
    </location>
</feature>
<feature type="chain" id="PRO_0000420448" description="Single-stranded DNA-binding protein WHY2, mitochondrial">
    <location>
        <begin position="30"/>
        <end position="238"/>
    </location>
</feature>
<feature type="region of interest" description="Required for ssDNA binding" evidence="1">
    <location>
        <begin position="62"/>
        <end position="67"/>
    </location>
</feature>
<feature type="strand" evidence="9">
    <location>
        <begin position="58"/>
        <end position="61"/>
    </location>
</feature>
<feature type="strand" evidence="9">
    <location>
        <begin position="63"/>
        <end position="72"/>
    </location>
</feature>
<feature type="strand" evidence="9">
    <location>
        <begin position="75"/>
        <end position="79"/>
    </location>
</feature>
<feature type="helix" evidence="9">
    <location>
        <begin position="80"/>
        <end position="82"/>
    </location>
</feature>
<feature type="strand" evidence="9">
    <location>
        <begin position="84"/>
        <end position="88"/>
    </location>
</feature>
<feature type="strand" evidence="9">
    <location>
        <begin position="91"/>
        <end position="101"/>
    </location>
</feature>
<feature type="helix" evidence="9">
    <location>
        <begin position="107"/>
        <end position="109"/>
    </location>
</feature>
<feature type="strand" evidence="9">
    <location>
        <begin position="111"/>
        <end position="115"/>
    </location>
</feature>
<feature type="helix" evidence="9">
    <location>
        <begin position="117"/>
        <end position="124"/>
    </location>
</feature>
<feature type="strand" evidence="9">
    <location>
        <begin position="132"/>
        <end position="136"/>
    </location>
</feature>
<feature type="strand" evidence="9">
    <location>
        <begin position="148"/>
        <end position="156"/>
    </location>
</feature>
<feature type="strand" evidence="9">
    <location>
        <begin position="160"/>
        <end position="171"/>
    </location>
</feature>
<feature type="turn" evidence="9">
    <location>
        <begin position="172"/>
        <end position="175"/>
    </location>
</feature>
<feature type="strand" evidence="9">
    <location>
        <begin position="176"/>
        <end position="185"/>
    </location>
</feature>
<feature type="helix" evidence="9">
    <location>
        <begin position="186"/>
        <end position="203"/>
    </location>
</feature>
<feature type="turn" evidence="9">
    <location>
        <begin position="208"/>
        <end position="210"/>
    </location>
</feature>
<sequence>MMKQARSLLSRSLCDQSKSLFEASTLRGFASWSNSSTPGRGFPGKDAAKPSGRLFAPYSIFKGKAALSVEPVLPSFTEIDSGNLRIDRRGSLMMTFMPAIGERKYDWEKKQKFALSPTEVGSLISMGSKDSSEFFHDPSMKSSNAGQVRKSLSVKPHADGSGYFISLSVNNSILKTNDYFVVPVTKAEFAVMKTAFSFALPHIMGWNRLTGHVNTEALPSRNVSHLKTEPQLELEWDK</sequence>
<reference key="1">
    <citation type="journal article" date="2000" name="Nature">
        <title>Sequence and analysis of chromosome 1 of the plant Arabidopsis thaliana.</title>
        <authorList>
            <person name="Theologis A."/>
            <person name="Ecker J.R."/>
            <person name="Palm C.J."/>
            <person name="Federspiel N.A."/>
            <person name="Kaul S."/>
            <person name="White O."/>
            <person name="Alonso J."/>
            <person name="Altafi H."/>
            <person name="Araujo R."/>
            <person name="Bowman C.L."/>
            <person name="Brooks S.Y."/>
            <person name="Buehler E."/>
            <person name="Chan A."/>
            <person name="Chao Q."/>
            <person name="Chen H."/>
            <person name="Cheuk R.F."/>
            <person name="Chin C.W."/>
            <person name="Chung M.K."/>
            <person name="Conn L."/>
            <person name="Conway A.B."/>
            <person name="Conway A.R."/>
            <person name="Creasy T.H."/>
            <person name="Dewar K."/>
            <person name="Dunn P."/>
            <person name="Etgu P."/>
            <person name="Feldblyum T.V."/>
            <person name="Feng J.-D."/>
            <person name="Fong B."/>
            <person name="Fujii C.Y."/>
            <person name="Gill J.E."/>
            <person name="Goldsmith A.D."/>
            <person name="Haas B."/>
            <person name="Hansen N.F."/>
            <person name="Hughes B."/>
            <person name="Huizar L."/>
            <person name="Hunter J.L."/>
            <person name="Jenkins J."/>
            <person name="Johnson-Hopson C."/>
            <person name="Khan S."/>
            <person name="Khaykin E."/>
            <person name="Kim C.J."/>
            <person name="Koo H.L."/>
            <person name="Kremenetskaia I."/>
            <person name="Kurtz D.B."/>
            <person name="Kwan A."/>
            <person name="Lam B."/>
            <person name="Langin-Hooper S."/>
            <person name="Lee A."/>
            <person name="Lee J.M."/>
            <person name="Lenz C.A."/>
            <person name="Li J.H."/>
            <person name="Li Y.-P."/>
            <person name="Lin X."/>
            <person name="Liu S.X."/>
            <person name="Liu Z.A."/>
            <person name="Luros J.S."/>
            <person name="Maiti R."/>
            <person name="Marziali A."/>
            <person name="Militscher J."/>
            <person name="Miranda M."/>
            <person name="Nguyen M."/>
            <person name="Nierman W.C."/>
            <person name="Osborne B.I."/>
            <person name="Pai G."/>
            <person name="Peterson J."/>
            <person name="Pham P.K."/>
            <person name="Rizzo M."/>
            <person name="Rooney T."/>
            <person name="Rowley D."/>
            <person name="Sakano H."/>
            <person name="Salzberg S.L."/>
            <person name="Schwartz J.R."/>
            <person name="Shinn P."/>
            <person name="Southwick A.M."/>
            <person name="Sun H."/>
            <person name="Tallon L.J."/>
            <person name="Tambunga G."/>
            <person name="Toriumi M.J."/>
            <person name="Town C.D."/>
            <person name="Utterback T."/>
            <person name="Van Aken S."/>
            <person name="Vaysberg M."/>
            <person name="Vysotskaia V.S."/>
            <person name="Walker M."/>
            <person name="Wu D."/>
            <person name="Yu G."/>
            <person name="Fraser C.M."/>
            <person name="Venter J.C."/>
            <person name="Davis R.W."/>
        </authorList>
    </citation>
    <scope>NUCLEOTIDE SEQUENCE [LARGE SCALE GENOMIC DNA]</scope>
    <source>
        <strain>cv. Columbia</strain>
    </source>
</reference>
<reference key="2">
    <citation type="journal article" date="2017" name="Plant J.">
        <title>Araport11: a complete reannotation of the Arabidopsis thaliana reference genome.</title>
        <authorList>
            <person name="Cheng C.Y."/>
            <person name="Krishnakumar V."/>
            <person name="Chan A.P."/>
            <person name="Thibaud-Nissen F."/>
            <person name="Schobel S."/>
            <person name="Town C.D."/>
        </authorList>
    </citation>
    <scope>GENOME REANNOTATION</scope>
    <source>
        <strain>cv. Columbia</strain>
    </source>
</reference>
<reference key="3">
    <citation type="journal article" date="2003" name="Science">
        <title>Empirical analysis of transcriptional activity in the Arabidopsis genome.</title>
        <authorList>
            <person name="Yamada K."/>
            <person name="Lim J."/>
            <person name="Dale J.M."/>
            <person name="Chen H."/>
            <person name="Shinn P."/>
            <person name="Palm C.J."/>
            <person name="Southwick A.M."/>
            <person name="Wu H.C."/>
            <person name="Kim C.J."/>
            <person name="Nguyen M."/>
            <person name="Pham P.K."/>
            <person name="Cheuk R.F."/>
            <person name="Karlin-Newmann G."/>
            <person name="Liu S.X."/>
            <person name="Lam B."/>
            <person name="Sakano H."/>
            <person name="Wu T."/>
            <person name="Yu G."/>
            <person name="Miranda M."/>
            <person name="Quach H.L."/>
            <person name="Tripp M."/>
            <person name="Chang C.H."/>
            <person name="Lee J.M."/>
            <person name="Toriumi M.J."/>
            <person name="Chan M.M."/>
            <person name="Tang C.C."/>
            <person name="Onodera C.S."/>
            <person name="Deng J.M."/>
            <person name="Akiyama K."/>
            <person name="Ansari Y."/>
            <person name="Arakawa T."/>
            <person name="Banh J."/>
            <person name="Banno F."/>
            <person name="Bowser L."/>
            <person name="Brooks S.Y."/>
            <person name="Carninci P."/>
            <person name="Chao Q."/>
            <person name="Choy N."/>
            <person name="Enju A."/>
            <person name="Goldsmith A.D."/>
            <person name="Gurjal M."/>
            <person name="Hansen N.F."/>
            <person name="Hayashizaki Y."/>
            <person name="Johnson-Hopson C."/>
            <person name="Hsuan V.W."/>
            <person name="Iida K."/>
            <person name="Karnes M."/>
            <person name="Khan S."/>
            <person name="Koesema E."/>
            <person name="Ishida J."/>
            <person name="Jiang P.X."/>
            <person name="Jones T."/>
            <person name="Kawai J."/>
            <person name="Kamiya A."/>
            <person name="Meyers C."/>
            <person name="Nakajima M."/>
            <person name="Narusaka M."/>
            <person name="Seki M."/>
            <person name="Sakurai T."/>
            <person name="Satou M."/>
            <person name="Tamse R."/>
            <person name="Vaysberg M."/>
            <person name="Wallender E.K."/>
            <person name="Wong C."/>
            <person name="Yamamura Y."/>
            <person name="Yuan S."/>
            <person name="Shinozaki K."/>
            <person name="Davis R.W."/>
            <person name="Theologis A."/>
            <person name="Ecker J.R."/>
        </authorList>
    </citation>
    <scope>NUCLEOTIDE SEQUENCE [LARGE SCALE MRNA]</scope>
    <source>
        <strain>cv. Columbia</strain>
    </source>
</reference>
<reference key="4">
    <citation type="submission" date="2009-03" db="EMBL/GenBank/DDBJ databases">
        <title>ORF cloning and analysis of Arabidopsis transcription factor genes.</title>
        <authorList>
            <person name="Fujita M."/>
            <person name="Mizukado S."/>
            <person name="Seki M."/>
            <person name="Shinozaki K."/>
            <person name="Mitsuda N."/>
            <person name="Takiguchi Y."/>
            <person name="Takagi M."/>
        </authorList>
    </citation>
    <scope>NUCLEOTIDE SEQUENCE [LARGE SCALE MRNA]</scope>
</reference>
<reference key="5">
    <citation type="journal article" date="2005" name="FEBS Lett.">
        <title>DNA-binding proteins of the Whirly family in Arabidopsis thaliana are targeted to the organelles.</title>
        <authorList>
            <person name="Krause K."/>
            <person name="Kilbienski I."/>
            <person name="Mulisch M."/>
            <person name="Roediger A."/>
            <person name="Schaefer A."/>
            <person name="Krupinska K."/>
        </authorList>
    </citation>
    <scope>SUBCELLULAR LOCATION</scope>
    <scope>GENE FAMILY</scope>
    <scope>NOMENCLATURE</scope>
</reference>
<reference key="6">
    <citation type="journal article" date="2005" name="Trends Plant Sci.">
        <title>Whirly transcription factors: defense gene regulation and beyond.</title>
        <authorList>
            <person name="Desveaux D."/>
            <person name="Marechal A."/>
            <person name="Brisson N."/>
        </authorList>
    </citation>
    <scope>GENE FAMILY</scope>
</reference>
<reference key="7">
    <citation type="journal article" date="2008" name="BMC Plant Biol.">
        <title>Overexpression of mtDNA-associated AtWhy2 compromises mitochondrial function.</title>
        <authorList>
            <person name="Marechal A."/>
            <person name="Parent J.S."/>
            <person name="Sabar M."/>
            <person name="Veronneau-Lafortune F."/>
            <person name="Abou-Rached C."/>
            <person name="Brisson N."/>
        </authorList>
    </citation>
    <scope>FUNCTION</scope>
    <scope>SUBCELLULAR LOCATION</scope>
    <scope>DISRUPTION PHENOTYPE</scope>
</reference>
<reference key="8">
    <citation type="journal article" date="2010" name="Plant Cell">
        <title>Crystal structures of DNA-Whirly complexes and their role in Arabidopsis organelle genome repair.</title>
        <authorList>
            <person name="Cappadocia L."/>
            <person name="Marechal A."/>
            <person name="Parent J.S."/>
            <person name="Lepage E."/>
            <person name="Sygusch J."/>
            <person name="Brisson N."/>
        </authorList>
    </citation>
    <scope>FUNCTION</scope>
</reference>
<reference key="9">
    <citation type="journal article" date="2012" name="Plant J.">
        <title>A RAD52-like single-stranded DNA binding protein affects mitochondrial DNA repair by recombination.</title>
        <authorList>
            <person name="Janicka S."/>
            <person name="Kuehn K."/>
            <person name="Le Ret M."/>
            <person name="Bonnard G."/>
            <person name="Imbault P."/>
            <person name="Augustyniak H."/>
            <person name="Gualberto J.M."/>
        </authorList>
    </citation>
    <scope>FUNCTION</scope>
    <scope>SUBCELLULAR LOCATION</scope>
</reference>
<accession>Q8VYF7</accession>
<accession>Q9FVV2</accession>
<gene>
    <name type="primary">WHY2</name>
    <name type="ordered locus">At1g71260</name>
    <name type="ORF">F3I17.9</name>
</gene>
<comment type="function">
    <text evidence="4 5 6">Single-stranded DNA-binding protein that associates with mitochondrial DNA and may play a role in the regulation of the gene expression machinery. Also seems to be required to prevent break-induced DNA rearrangements in the mitochondrial genome. Can bind to melt double-stranded DNA in vivo.</text>
</comment>
<comment type="subunit">
    <text evidence="1">Homotetramer.</text>
</comment>
<comment type="interaction">
    <interactant intactId="EBI-15219982">
        <id>Q8VYF7</id>
    </interactant>
    <interactant intactId="EBI-2355356">
        <id>Q9SAC6</id>
        <label>GWD1</label>
    </interactant>
    <organismsDiffer>false</organismsDiffer>
    <experiments>3</experiments>
</comment>
<comment type="subcellular location">
    <subcellularLocation>
        <location evidence="3 4 6">Mitochondrion</location>
    </subcellularLocation>
</comment>
<comment type="disruption phenotype">
    <text evidence="4">No visible phenotype under normal growth conditions.</text>
</comment>
<comment type="miscellaneous">
    <text evidence="8">Plants over-expressing WHY2 are small with dark-green distorted leaves, exhibit early senescence and produces shorter siliques with half the amount of seeds found in wild-type plants.</text>
</comment>
<comment type="similarity">
    <text evidence="7">Belongs to the Whirly family.</text>
</comment>
<comment type="sequence caution" evidence="7">
    <conflict type="erroneous initiation">
        <sequence resource="EMBL-CDS" id="AAG51881"/>
    </conflict>
    <text>Truncated N-terminus.</text>
</comment>
<keyword id="KW-0002">3D-structure</keyword>
<keyword id="KW-0227">DNA damage</keyword>
<keyword id="KW-0234">DNA repair</keyword>
<keyword id="KW-0496">Mitochondrion</keyword>
<keyword id="KW-1185">Reference proteome</keyword>
<keyword id="KW-0809">Transit peptide</keyword>
<name>WHY2_ARATH</name>
<dbReference type="EMBL" id="AC016162">
    <property type="protein sequence ID" value="AAG51881.1"/>
    <property type="status" value="ALT_INIT"/>
    <property type="molecule type" value="Genomic_DNA"/>
</dbReference>
<dbReference type="EMBL" id="CP002684">
    <property type="protein sequence ID" value="AEE35181.1"/>
    <property type="molecule type" value="Genomic_DNA"/>
</dbReference>
<dbReference type="EMBL" id="AY072110">
    <property type="protein sequence ID" value="AAL59932.1"/>
    <property type="molecule type" value="mRNA"/>
</dbReference>
<dbReference type="EMBL" id="AY122961">
    <property type="protein sequence ID" value="AAM67494.1"/>
    <property type="molecule type" value="mRNA"/>
</dbReference>
<dbReference type="EMBL" id="AB493532">
    <property type="protein sequence ID" value="BAH30370.1"/>
    <property type="molecule type" value="mRNA"/>
</dbReference>
<dbReference type="PIR" id="C96737">
    <property type="entry name" value="C96737"/>
</dbReference>
<dbReference type="RefSeq" id="NP_177282.2">
    <property type="nucleotide sequence ID" value="NM_105795.5"/>
</dbReference>
<dbReference type="PDB" id="4KOP">
    <property type="method" value="X-ray"/>
    <property type="resolution" value="1.75 A"/>
    <property type="chains" value="A/B/C/D=45-212"/>
</dbReference>
<dbReference type="PDBsum" id="4KOP"/>
<dbReference type="SMR" id="Q8VYF7"/>
<dbReference type="BioGRID" id="28687">
    <property type="interactions" value="7"/>
</dbReference>
<dbReference type="ComplexPortal" id="CPX-3584">
    <property type="entry name" value="WHY2 complex"/>
</dbReference>
<dbReference type="FunCoup" id="Q8VYF7">
    <property type="interactions" value="675"/>
</dbReference>
<dbReference type="IntAct" id="Q8VYF7">
    <property type="interactions" value="5"/>
</dbReference>
<dbReference type="STRING" id="3702.Q8VYF7"/>
<dbReference type="GlyGen" id="Q8VYF7">
    <property type="glycosylation" value="1 site"/>
</dbReference>
<dbReference type="MetOSite" id="Q8VYF7"/>
<dbReference type="PaxDb" id="3702-AT1G71260.1"/>
<dbReference type="ProteomicsDB" id="242640"/>
<dbReference type="EnsemblPlants" id="AT1G71260.1">
    <property type="protein sequence ID" value="AT1G71260.1"/>
    <property type="gene ID" value="AT1G71260"/>
</dbReference>
<dbReference type="GeneID" id="843467"/>
<dbReference type="Gramene" id="AT1G71260.1">
    <property type="protein sequence ID" value="AT1G71260.1"/>
    <property type="gene ID" value="AT1G71260"/>
</dbReference>
<dbReference type="KEGG" id="ath:AT1G71260"/>
<dbReference type="Araport" id="AT1G71260"/>
<dbReference type="TAIR" id="AT1G71260">
    <property type="gene designation" value="ATWHY2"/>
</dbReference>
<dbReference type="eggNOG" id="ENOG502QRRY">
    <property type="taxonomic scope" value="Eukaryota"/>
</dbReference>
<dbReference type="HOGENOM" id="CLU_062935_0_0_1"/>
<dbReference type="InParanoid" id="Q8VYF7"/>
<dbReference type="OMA" id="SCELFHD"/>
<dbReference type="PhylomeDB" id="Q8VYF7"/>
<dbReference type="CD-CODE" id="4299E36E">
    <property type="entry name" value="Nucleolus"/>
</dbReference>
<dbReference type="EvolutionaryTrace" id="Q8VYF7"/>
<dbReference type="PRO" id="PR:Q8VYF7"/>
<dbReference type="Proteomes" id="UP000006548">
    <property type="component" value="Chromosome 1"/>
</dbReference>
<dbReference type="ExpressionAtlas" id="Q8VYF7">
    <property type="expression patterns" value="baseline and differential"/>
</dbReference>
<dbReference type="GO" id="GO:1990391">
    <property type="term" value="C:DNA repair complex"/>
    <property type="evidence" value="ECO:0000353"/>
    <property type="project" value="ComplexPortal"/>
</dbReference>
<dbReference type="GO" id="GO:0005739">
    <property type="term" value="C:mitochondrion"/>
    <property type="evidence" value="ECO:0000314"/>
    <property type="project" value="ComplexPortal"/>
</dbReference>
<dbReference type="GO" id="GO:0003677">
    <property type="term" value="F:DNA binding"/>
    <property type="evidence" value="ECO:0000250"/>
    <property type="project" value="TAIR"/>
</dbReference>
<dbReference type="GO" id="GO:0003729">
    <property type="term" value="F:mRNA binding"/>
    <property type="evidence" value="ECO:0000314"/>
    <property type="project" value="TAIR"/>
</dbReference>
<dbReference type="GO" id="GO:0003697">
    <property type="term" value="F:single-stranded DNA binding"/>
    <property type="evidence" value="ECO:0000314"/>
    <property type="project" value="TAIR"/>
</dbReference>
<dbReference type="GO" id="GO:0006952">
    <property type="term" value="P:defense response"/>
    <property type="evidence" value="ECO:0000304"/>
    <property type="project" value="TAIR"/>
</dbReference>
<dbReference type="GO" id="GO:0006281">
    <property type="term" value="P:DNA repair"/>
    <property type="evidence" value="ECO:0000315"/>
    <property type="project" value="ComplexPortal"/>
</dbReference>
<dbReference type="GO" id="GO:0006355">
    <property type="term" value="P:regulation of DNA-templated transcription"/>
    <property type="evidence" value="ECO:0007669"/>
    <property type="project" value="InterPro"/>
</dbReference>
<dbReference type="FunFam" id="2.30.31.10:FF:000002">
    <property type="entry name" value="Single-stranded DNA-binding protein WHY2, mitochondrial"/>
    <property type="match status" value="1"/>
</dbReference>
<dbReference type="Gene3D" id="2.30.31.10">
    <property type="entry name" value="Transcriptional Coactivator Pc4, Chain A"/>
    <property type="match status" value="1"/>
</dbReference>
<dbReference type="InterPro" id="IPR009044">
    <property type="entry name" value="ssDNA-bd_transcriptional_reg"/>
</dbReference>
<dbReference type="InterPro" id="IPR013742">
    <property type="entry name" value="Whirly"/>
</dbReference>
<dbReference type="PANTHER" id="PTHR31745">
    <property type="entry name" value="SINGLE-STRANDED DNA-BINDING PROTEIN WHY2, MITOCHONDRIAL"/>
    <property type="match status" value="1"/>
</dbReference>
<dbReference type="PANTHER" id="PTHR31745:SF1">
    <property type="entry name" value="SINGLE-STRANDED DNA-BINDING PROTEIN WHY2, MITOCHONDRIAL"/>
    <property type="match status" value="1"/>
</dbReference>
<dbReference type="Pfam" id="PF08536">
    <property type="entry name" value="Whirly"/>
    <property type="match status" value="1"/>
</dbReference>
<dbReference type="SUPFAM" id="SSF54447">
    <property type="entry name" value="ssDNA-binding transcriptional regulator domain"/>
    <property type="match status" value="1"/>
</dbReference>
<organism>
    <name type="scientific">Arabidopsis thaliana</name>
    <name type="common">Mouse-ear cress</name>
    <dbReference type="NCBI Taxonomy" id="3702"/>
    <lineage>
        <taxon>Eukaryota</taxon>
        <taxon>Viridiplantae</taxon>
        <taxon>Streptophyta</taxon>
        <taxon>Embryophyta</taxon>
        <taxon>Tracheophyta</taxon>
        <taxon>Spermatophyta</taxon>
        <taxon>Magnoliopsida</taxon>
        <taxon>eudicotyledons</taxon>
        <taxon>Gunneridae</taxon>
        <taxon>Pentapetalae</taxon>
        <taxon>rosids</taxon>
        <taxon>malvids</taxon>
        <taxon>Brassicales</taxon>
        <taxon>Brassicaceae</taxon>
        <taxon>Camelineae</taxon>
        <taxon>Arabidopsis</taxon>
    </lineage>
</organism>
<evidence type="ECO:0000250" key="1"/>
<evidence type="ECO:0000255" key="2"/>
<evidence type="ECO:0000269" key="3">
    <source>
    </source>
</evidence>
<evidence type="ECO:0000269" key="4">
    <source>
    </source>
</evidence>
<evidence type="ECO:0000269" key="5">
    <source>
    </source>
</evidence>
<evidence type="ECO:0000269" key="6">
    <source>
    </source>
</evidence>
<evidence type="ECO:0000305" key="7"/>
<evidence type="ECO:0000305" key="8">
    <source>
    </source>
</evidence>
<evidence type="ECO:0007829" key="9">
    <source>
        <dbReference type="PDB" id="4KOP"/>
    </source>
</evidence>
<protein>
    <recommendedName>
        <fullName>Single-stranded DNA-binding protein WHY2, mitochondrial</fullName>
    </recommendedName>
    <alternativeName>
        <fullName>Protein WHIRLY 2</fullName>
        <shortName>AtWHY2</shortName>
    </alternativeName>
</protein>